<sequence>MSFTVDDRVLALAGIAQALQQVRRIADTGHSDAAAVRTAVESVFRVDASSPQEVFGDRHALKAGLRLLHNYFRSQGQDPILPKLALSVLQLERRFVQEGETVNKVASGIERAQRQAAELGDSGHPDVLANLGGLYADTISHLKPRVMVQGNPHYLGQAGVVAEIRALLLAAVRSAVLWRQLGGSYWDFLFSRKAMIEAVDRQLA</sequence>
<reference key="1">
    <citation type="submission" date="2008-06" db="EMBL/GenBank/DDBJ databases">
        <title>Complete sequence of Stenotrophomonas maltophilia R551-3.</title>
        <authorList>
            <consortium name="US DOE Joint Genome Institute"/>
            <person name="Lucas S."/>
            <person name="Copeland A."/>
            <person name="Lapidus A."/>
            <person name="Glavina del Rio T."/>
            <person name="Dalin E."/>
            <person name="Tice H."/>
            <person name="Pitluck S."/>
            <person name="Chain P."/>
            <person name="Malfatti S."/>
            <person name="Shin M."/>
            <person name="Vergez L."/>
            <person name="Lang D."/>
            <person name="Schmutz J."/>
            <person name="Larimer F."/>
            <person name="Land M."/>
            <person name="Hauser L."/>
            <person name="Kyrpides N."/>
            <person name="Mikhailova N."/>
            <person name="Taghavi S."/>
            <person name="Monchy S."/>
            <person name="Newman L."/>
            <person name="Vangronsveld J."/>
            <person name="van der Lelie D."/>
            <person name="Richardson P."/>
        </authorList>
    </citation>
    <scope>NUCLEOTIDE SEQUENCE [LARGE SCALE GENOMIC DNA]</scope>
    <source>
        <strain>R551-3</strain>
    </source>
</reference>
<gene>
    <name evidence="1" type="primary">hflD</name>
    <name type="ordered locus">Smal_1918</name>
</gene>
<evidence type="ECO:0000255" key="1">
    <source>
        <dbReference type="HAMAP-Rule" id="MF_00695"/>
    </source>
</evidence>
<proteinExistence type="inferred from homology"/>
<name>HFLD_STRM5</name>
<protein>
    <recommendedName>
        <fullName evidence="1">High frequency lysogenization protein HflD homolog</fullName>
    </recommendedName>
</protein>
<comment type="subcellular location">
    <subcellularLocation>
        <location>Cytoplasm</location>
    </subcellularLocation>
    <subcellularLocation>
        <location evidence="1">Cell inner membrane</location>
        <topology evidence="1">Peripheral membrane protein</topology>
        <orientation evidence="1">Cytoplasmic side</orientation>
    </subcellularLocation>
</comment>
<comment type="similarity">
    <text evidence="1">Belongs to the HflD family.</text>
</comment>
<feature type="chain" id="PRO_1000132305" description="High frequency lysogenization protein HflD homolog">
    <location>
        <begin position="1"/>
        <end position="204"/>
    </location>
</feature>
<organism>
    <name type="scientific">Stenotrophomonas maltophilia (strain R551-3)</name>
    <dbReference type="NCBI Taxonomy" id="391008"/>
    <lineage>
        <taxon>Bacteria</taxon>
        <taxon>Pseudomonadati</taxon>
        <taxon>Pseudomonadota</taxon>
        <taxon>Gammaproteobacteria</taxon>
        <taxon>Lysobacterales</taxon>
        <taxon>Lysobacteraceae</taxon>
        <taxon>Stenotrophomonas</taxon>
        <taxon>Stenotrophomonas maltophilia group</taxon>
    </lineage>
</organism>
<dbReference type="EMBL" id="CP001111">
    <property type="protein sequence ID" value="ACF51622.1"/>
    <property type="molecule type" value="Genomic_DNA"/>
</dbReference>
<dbReference type="RefSeq" id="WP_006366435.1">
    <property type="nucleotide sequence ID" value="NC_011071.1"/>
</dbReference>
<dbReference type="SMR" id="B4SIN3"/>
<dbReference type="STRING" id="391008.Smal_1918"/>
<dbReference type="KEGG" id="smt:Smal_1918"/>
<dbReference type="eggNOG" id="COG2915">
    <property type="taxonomic scope" value="Bacteria"/>
</dbReference>
<dbReference type="HOGENOM" id="CLU_098920_0_0_6"/>
<dbReference type="OrthoDB" id="9788031at2"/>
<dbReference type="Proteomes" id="UP000001867">
    <property type="component" value="Chromosome"/>
</dbReference>
<dbReference type="GO" id="GO:0005737">
    <property type="term" value="C:cytoplasm"/>
    <property type="evidence" value="ECO:0007669"/>
    <property type="project" value="UniProtKB-SubCell"/>
</dbReference>
<dbReference type="GO" id="GO:0005886">
    <property type="term" value="C:plasma membrane"/>
    <property type="evidence" value="ECO:0007669"/>
    <property type="project" value="UniProtKB-SubCell"/>
</dbReference>
<dbReference type="Gene3D" id="1.10.3890.10">
    <property type="entry name" value="HflD-like"/>
    <property type="match status" value="1"/>
</dbReference>
<dbReference type="HAMAP" id="MF_00695">
    <property type="entry name" value="HflD_protein"/>
    <property type="match status" value="1"/>
</dbReference>
<dbReference type="InterPro" id="IPR007451">
    <property type="entry name" value="HflD"/>
</dbReference>
<dbReference type="InterPro" id="IPR035932">
    <property type="entry name" value="HflD-like_sf"/>
</dbReference>
<dbReference type="NCBIfam" id="NF001246">
    <property type="entry name" value="PRK00218.1-2"/>
    <property type="match status" value="1"/>
</dbReference>
<dbReference type="NCBIfam" id="NF001250">
    <property type="entry name" value="PRK00218.1-6"/>
    <property type="match status" value="1"/>
</dbReference>
<dbReference type="PANTHER" id="PTHR38100">
    <property type="entry name" value="HIGH FREQUENCY LYSOGENIZATION PROTEIN HFLD"/>
    <property type="match status" value="1"/>
</dbReference>
<dbReference type="PANTHER" id="PTHR38100:SF1">
    <property type="entry name" value="HIGH FREQUENCY LYSOGENIZATION PROTEIN HFLD"/>
    <property type="match status" value="1"/>
</dbReference>
<dbReference type="Pfam" id="PF04356">
    <property type="entry name" value="DUF489"/>
    <property type="match status" value="1"/>
</dbReference>
<dbReference type="SUPFAM" id="SSF101322">
    <property type="entry name" value="YcfC-like"/>
    <property type="match status" value="1"/>
</dbReference>
<accession>B4SIN3</accession>
<keyword id="KW-0997">Cell inner membrane</keyword>
<keyword id="KW-1003">Cell membrane</keyword>
<keyword id="KW-0963">Cytoplasm</keyword>
<keyword id="KW-0472">Membrane</keyword>